<organism>
    <name type="scientific">Xenopus laevis</name>
    <name type="common">African clawed frog</name>
    <dbReference type="NCBI Taxonomy" id="8355"/>
    <lineage>
        <taxon>Eukaryota</taxon>
        <taxon>Metazoa</taxon>
        <taxon>Chordata</taxon>
        <taxon>Craniata</taxon>
        <taxon>Vertebrata</taxon>
        <taxon>Euteleostomi</taxon>
        <taxon>Amphibia</taxon>
        <taxon>Batrachia</taxon>
        <taxon>Anura</taxon>
        <taxon>Pipoidea</taxon>
        <taxon>Pipidae</taxon>
        <taxon>Xenopodinae</taxon>
        <taxon>Xenopus</taxon>
        <taxon>Xenopus</taxon>
    </lineage>
</organism>
<sequence length="135" mass="15366">MVLESIARVIKVQLPAYLKRLPIPDSIAGFIRLTVSEWLRLLPFLGVLALLGYLAIRPFLLKKKQQKDSLINLKIQKENPKVVNEINIEDLHLAKAAYCRCWRSKTFPVCDGSHNKHNELTGDNVGPLILKKKEV</sequence>
<name>CID2A_XENLA</name>
<protein>
    <recommendedName>
        <fullName>CDGSH iron-sulfur domain-containing protein 2A</fullName>
    </recommendedName>
</protein>
<dbReference type="EMBL" id="BC059342">
    <property type="protein sequence ID" value="AAH59342.1"/>
    <property type="molecule type" value="mRNA"/>
</dbReference>
<dbReference type="RefSeq" id="NP_001083220.1">
    <property type="nucleotide sequence ID" value="NM_001089751.1"/>
</dbReference>
<dbReference type="SMR" id="Q6PCF8"/>
<dbReference type="BioGRID" id="100137">
    <property type="interactions" value="1"/>
</dbReference>
<dbReference type="GeneID" id="398808"/>
<dbReference type="KEGG" id="xla:398808"/>
<dbReference type="AGR" id="Xenbase:XB-GENE-6255169"/>
<dbReference type="CTD" id="398808"/>
<dbReference type="Xenbase" id="XB-GENE-6255169">
    <property type="gene designation" value="cisd2.L"/>
</dbReference>
<dbReference type="OMA" id="NCANVCY"/>
<dbReference type="OrthoDB" id="449252at2759"/>
<dbReference type="Proteomes" id="UP000186698">
    <property type="component" value="Chromosome 1L"/>
</dbReference>
<dbReference type="Bgee" id="398808">
    <property type="expression patterns" value="Expressed in lung and 19 other cell types or tissues"/>
</dbReference>
<dbReference type="GO" id="GO:0005789">
    <property type="term" value="C:endoplasmic reticulum membrane"/>
    <property type="evidence" value="ECO:0000250"/>
    <property type="project" value="UniProtKB"/>
</dbReference>
<dbReference type="GO" id="GO:0005741">
    <property type="term" value="C:mitochondrial outer membrane"/>
    <property type="evidence" value="ECO:0000250"/>
    <property type="project" value="UniProtKB"/>
</dbReference>
<dbReference type="GO" id="GO:0051537">
    <property type="term" value="F:2 iron, 2 sulfur cluster binding"/>
    <property type="evidence" value="ECO:0000250"/>
    <property type="project" value="UniProtKB"/>
</dbReference>
<dbReference type="GO" id="GO:0046872">
    <property type="term" value="F:metal ion binding"/>
    <property type="evidence" value="ECO:0007669"/>
    <property type="project" value="UniProtKB-KW"/>
</dbReference>
<dbReference type="GO" id="GO:0042803">
    <property type="term" value="F:protein homodimerization activity"/>
    <property type="evidence" value="ECO:0000250"/>
    <property type="project" value="UniProtKB"/>
</dbReference>
<dbReference type="GO" id="GO:0000422">
    <property type="term" value="P:autophagy of mitochondrion"/>
    <property type="evidence" value="ECO:0000250"/>
    <property type="project" value="UniProtKB"/>
</dbReference>
<dbReference type="GO" id="GO:0010506">
    <property type="term" value="P:regulation of autophagy"/>
    <property type="evidence" value="ECO:0000250"/>
    <property type="project" value="UniProtKB"/>
</dbReference>
<dbReference type="FunFam" id="3.40.5.90:FF:000001">
    <property type="entry name" value="CDGSH iron-sulfur domain-containing protein 1"/>
    <property type="match status" value="1"/>
</dbReference>
<dbReference type="Gene3D" id="3.40.5.90">
    <property type="entry name" value="CDGSH iron-sulfur domain, mitoNEET-type"/>
    <property type="match status" value="1"/>
</dbReference>
<dbReference type="InterPro" id="IPR045131">
    <property type="entry name" value="CISD1/2"/>
</dbReference>
<dbReference type="InterPro" id="IPR018967">
    <property type="entry name" value="FeS-contain_CDGSH-typ"/>
</dbReference>
<dbReference type="InterPro" id="IPR019610">
    <property type="entry name" value="FeS-contain_mitoNEET_N"/>
</dbReference>
<dbReference type="InterPro" id="IPR042216">
    <property type="entry name" value="MitoNEET_CISD"/>
</dbReference>
<dbReference type="PANTHER" id="PTHR13680">
    <property type="entry name" value="CDGSH IRON-SULFUR DOMAIN-CONTAINING PROTEIN 1"/>
    <property type="match status" value="1"/>
</dbReference>
<dbReference type="PANTHER" id="PTHR13680:SF33">
    <property type="entry name" value="CDGSH IRON-SULFUR DOMAIN-CONTAINING PROTEIN 2"/>
    <property type="match status" value="1"/>
</dbReference>
<dbReference type="Pfam" id="PF10660">
    <property type="entry name" value="MitoNEET_N"/>
    <property type="match status" value="1"/>
</dbReference>
<dbReference type="Pfam" id="PF09360">
    <property type="entry name" value="zf-CDGSH"/>
    <property type="match status" value="1"/>
</dbReference>
<dbReference type="SMART" id="SM00704">
    <property type="entry name" value="ZnF_CDGSH"/>
    <property type="match status" value="1"/>
</dbReference>
<comment type="function">
    <text evidence="1">Regulator of autophagy that contributes to antagonize becn1-mediated cellular autophagy at the endoplasmic reticulum. Participates in the interaction of bcl2 with becn1 and is required for bcl2-mediated depression of endoplasmic reticulum Ca(2+) stores during autophagy (By similarity).</text>
</comment>
<comment type="cofactor">
    <cofactor evidence="1">
        <name>[2Fe-2S] cluster</name>
        <dbReference type="ChEBI" id="CHEBI:190135"/>
    </cofactor>
    <text evidence="1">Binds 1 [2Fe-2S] cluster.</text>
</comment>
<comment type="subunit">
    <text evidence="1">Homodimer.</text>
</comment>
<comment type="subcellular location">
    <subcellularLocation>
        <location evidence="1">Endoplasmic reticulum membrane</location>
        <topology evidence="1">Single-pass membrane protein</topology>
    </subcellularLocation>
    <subcellularLocation>
        <location evidence="1">Mitochondrion outer membrane</location>
        <topology evidence="1">Single-pass membrane protein</topology>
    </subcellularLocation>
</comment>
<comment type="similarity">
    <text evidence="3">Belongs to the CISD protein family. CISD2 subfamily.</text>
</comment>
<proteinExistence type="evidence at transcript level"/>
<evidence type="ECO:0000250" key="1"/>
<evidence type="ECO:0000255" key="2"/>
<evidence type="ECO:0000305" key="3"/>
<keyword id="KW-0001">2Fe-2S</keyword>
<keyword id="KW-0072">Autophagy</keyword>
<keyword id="KW-0256">Endoplasmic reticulum</keyword>
<keyword id="KW-0408">Iron</keyword>
<keyword id="KW-0411">Iron-sulfur</keyword>
<keyword id="KW-0472">Membrane</keyword>
<keyword id="KW-0479">Metal-binding</keyword>
<keyword id="KW-0496">Mitochondrion</keyword>
<keyword id="KW-1000">Mitochondrion outer membrane</keyword>
<keyword id="KW-1185">Reference proteome</keyword>
<keyword id="KW-0812">Transmembrane</keyword>
<keyword id="KW-1133">Transmembrane helix</keyword>
<accession>Q6PCF8</accession>
<gene>
    <name type="primary">cisd2-a</name>
</gene>
<feature type="chain" id="PRO_0000316007" description="CDGSH iron-sulfur domain-containing protein 2A">
    <location>
        <begin position="1"/>
        <end position="135"/>
    </location>
</feature>
<feature type="topological domain" description="Lumenal" evidence="2">
    <location>
        <begin position="1"/>
        <end position="37"/>
    </location>
</feature>
<feature type="transmembrane region" description="Helical" evidence="2">
    <location>
        <begin position="38"/>
        <end position="60"/>
    </location>
</feature>
<feature type="topological domain" description="Cytoplasmic" evidence="2">
    <location>
        <begin position="61"/>
        <end position="135"/>
    </location>
</feature>
<feature type="binding site" evidence="1">
    <location>
        <position position="99"/>
    </location>
    <ligand>
        <name>[2Fe-2S] cluster</name>
        <dbReference type="ChEBI" id="CHEBI:190135"/>
    </ligand>
</feature>
<feature type="binding site" evidence="1">
    <location>
        <position position="101"/>
    </location>
    <ligand>
        <name>[2Fe-2S] cluster</name>
        <dbReference type="ChEBI" id="CHEBI:190135"/>
    </ligand>
</feature>
<feature type="binding site" evidence="1">
    <location>
        <position position="110"/>
    </location>
    <ligand>
        <name>[2Fe-2S] cluster</name>
        <dbReference type="ChEBI" id="CHEBI:190135"/>
    </ligand>
</feature>
<feature type="binding site" evidence="1">
    <location>
        <position position="114"/>
    </location>
    <ligand>
        <name>[2Fe-2S] cluster</name>
        <dbReference type="ChEBI" id="CHEBI:190135"/>
    </ligand>
</feature>
<reference key="1">
    <citation type="submission" date="2003-10" db="EMBL/GenBank/DDBJ databases">
        <authorList>
            <consortium name="NIH - Xenopus Gene Collection (XGC) project"/>
        </authorList>
    </citation>
    <scope>NUCLEOTIDE SEQUENCE [LARGE SCALE MRNA]</scope>
    <source>
        <tissue>Ovary</tissue>
    </source>
</reference>